<evidence type="ECO:0000305" key="1"/>
<evidence type="ECO:0000305" key="2">
    <source>
    </source>
</evidence>
<sequence>MGLKLHIHWFDKKTEEFKGGEYSKDFGDDGSVIESLGMPLKDNINNGWFDVEKPWVSILQPHFKNVIDISKFDYFVSFVYRDGNW</sequence>
<accession>P02986</accession>
<geneLocation type="plasmid">
    <name>Clo DF13</name>
</geneLocation>
<protein>
    <recommendedName>
        <fullName>Cloacin immunity protein</fullName>
    </recommendedName>
</protein>
<proteinExistence type="evidence at protein level"/>
<gene>
    <name type="primary">cim</name>
</gene>
<feature type="chain" id="PRO_0000218695" description="Cloacin immunity protein">
    <location>
        <begin position="1"/>
        <end position="85"/>
    </location>
</feature>
<feature type="modified residue" description="N6-methyllysine" evidence="2">
    <location>
        <position position="12"/>
    </location>
</feature>
<reference key="1">
    <citation type="journal article" date="1986" name="Plasmid">
        <title>The complete nucleotide sequence of the bacteriocinogenic plasmid CloDF13.</title>
        <authorList>
            <person name="Nijkamp H.J.J."/>
            <person name="de Lang R."/>
            <person name="Stuitje A.R."/>
            <person name="van den Elsen P.J.M."/>
            <person name="Veltkamp E."/>
            <person name="van Putten A.J."/>
        </authorList>
    </citation>
    <scope>NUCLEOTIDE SEQUENCE [GENOMIC DNA]</scope>
</reference>
<reference key="2">
    <citation type="journal article" date="1981" name="Nature">
        <title>Identification of mutations affecting replication control of plasmid Clo DF13.</title>
        <authorList>
            <person name="Stuitje A.R."/>
            <person name="Spelt C.E."/>
            <person name="Veltkamp E."/>
            <person name="Nijkamp H.J.J."/>
        </authorList>
    </citation>
    <scope>NUCLEOTIDE SEQUENCE [GENOMIC DNA]</scope>
</reference>
<reference key="3">
    <citation type="journal article" date="1980" name="Nucleic Acids Res.">
        <title>Molecular structure of the immunity gene and immunity protein of the bacteriocinogenic plasmid Clo DF13.</title>
        <authorList>
            <person name="van den Elzen P.J.M."/>
            <person name="Gaastra W."/>
            <person name="Spelt C.E."/>
            <person name="de Graaf F.K."/>
            <person name="Veltkamp E."/>
            <person name="Nijkamp H.J.J."/>
        </authorList>
    </citation>
    <scope>NUCLEOTIDE SEQUENCE [GENOMIC DNA]</scope>
    <scope>METHYLATION AT LYS-12</scope>
</reference>
<keyword id="KW-0079">Bacteriocin immunity</keyword>
<keyword id="KW-0488">Methylation</keyword>
<keyword id="KW-0614">Plasmid</keyword>
<name>IMMC_ECOLX</name>
<dbReference type="EMBL" id="X04466">
    <property type="protein sequence ID" value="CAA28146.1"/>
    <property type="molecule type" value="Genomic_DNA"/>
</dbReference>
<dbReference type="PIR" id="A93250">
    <property type="entry name" value="IMECP3"/>
</dbReference>
<dbReference type="RefSeq" id="NP_052371.1">
    <property type="nucleotide sequence ID" value="NC_002119.1"/>
</dbReference>
<dbReference type="RefSeq" id="WP_010891189.1">
    <property type="nucleotide sequence ID" value="NZ_UNQR01000060.1"/>
</dbReference>
<dbReference type="SMR" id="P02986"/>
<dbReference type="iPTMnet" id="P02986"/>
<dbReference type="GO" id="GO:0015643">
    <property type="term" value="F:toxic substance binding"/>
    <property type="evidence" value="ECO:0007669"/>
    <property type="project" value="InterPro"/>
</dbReference>
<dbReference type="GO" id="GO:0030153">
    <property type="term" value="P:bacteriocin immunity"/>
    <property type="evidence" value="ECO:0007669"/>
    <property type="project" value="UniProtKB-KW"/>
</dbReference>
<dbReference type="Gene3D" id="3.10.50.20">
    <property type="entry name" value="Cloacin immunity protein"/>
    <property type="match status" value="1"/>
</dbReference>
<dbReference type="InterPro" id="IPR003063">
    <property type="entry name" value="Cloacn_immnty_fam"/>
</dbReference>
<dbReference type="InterPro" id="IPR036528">
    <property type="entry name" value="Cloacn_immnty_sf"/>
</dbReference>
<dbReference type="Pfam" id="PF03513">
    <property type="entry name" value="Cloacin_immun"/>
    <property type="match status" value="1"/>
</dbReference>
<dbReference type="PRINTS" id="PR01296">
    <property type="entry name" value="CLOACNIMMNTY"/>
</dbReference>
<dbReference type="SUPFAM" id="SSF54552">
    <property type="entry name" value="Colicin E3 immunity protein"/>
    <property type="match status" value="1"/>
</dbReference>
<organism>
    <name type="scientific">Escherichia coli</name>
    <dbReference type="NCBI Taxonomy" id="562"/>
    <lineage>
        <taxon>Bacteria</taxon>
        <taxon>Pseudomonadati</taxon>
        <taxon>Pseudomonadota</taxon>
        <taxon>Gammaproteobacteria</taxon>
        <taxon>Enterobacterales</taxon>
        <taxon>Enterobacteriaceae</taxon>
        <taxon>Escherichia</taxon>
    </lineage>
</organism>
<comment type="function">
    <text>This protein complexes with cloacin protein in equimolar amounts and inhibits it by binding with high affinity to the C-terminal catalytic domain of cloacin.</text>
</comment>
<comment type="miscellaneous">
    <text>Plasmid Clo DF13 originates from Enterobacter cloacae but is stably maintained in and studied mostly from E.coli.</text>
</comment>
<comment type="similarity">
    <text evidence="1">Belongs to the cloacin immunity protein family.</text>
</comment>